<evidence type="ECO:0000255" key="1">
    <source>
        <dbReference type="HAMAP-Rule" id="MF_00175"/>
    </source>
</evidence>
<evidence type="ECO:0000255" key="2">
    <source>
        <dbReference type="PROSITE-ProRule" id="PRU01250"/>
    </source>
</evidence>
<reference key="1">
    <citation type="submission" date="2007-09" db="EMBL/GenBank/DDBJ databases">
        <title>Complete genome sequence of Rickettsia akari.</title>
        <authorList>
            <person name="Madan A."/>
            <person name="Fahey J."/>
            <person name="Helton E."/>
            <person name="Ketteman M."/>
            <person name="Madan A."/>
            <person name="Rodrigues S."/>
            <person name="Sanchez A."/>
            <person name="Whiting M."/>
            <person name="Dasch G."/>
            <person name="Eremeeva M."/>
        </authorList>
    </citation>
    <scope>NUCLEOTIDE SEQUENCE [LARGE SCALE GENOMIC DNA]</scope>
    <source>
        <strain>Hartford</strain>
    </source>
</reference>
<gene>
    <name evidence="1" type="primary">clpX</name>
    <name type="ordered locus">A1C_05445</name>
</gene>
<proteinExistence type="inferred from homology"/>
<feature type="chain" id="PRO_1000024642" description="ATP-dependent Clp protease ATP-binding subunit ClpX">
    <location>
        <begin position="1"/>
        <end position="425"/>
    </location>
</feature>
<feature type="domain" description="ClpX-type ZB" evidence="2">
    <location>
        <begin position="1"/>
        <end position="53"/>
    </location>
</feature>
<feature type="binding site" evidence="2">
    <location>
        <position position="12"/>
    </location>
    <ligand>
        <name>Zn(2+)</name>
        <dbReference type="ChEBI" id="CHEBI:29105"/>
    </ligand>
</feature>
<feature type="binding site" evidence="2">
    <location>
        <position position="15"/>
    </location>
    <ligand>
        <name>Zn(2+)</name>
        <dbReference type="ChEBI" id="CHEBI:29105"/>
    </ligand>
</feature>
<feature type="binding site" evidence="2">
    <location>
        <position position="34"/>
    </location>
    <ligand>
        <name>Zn(2+)</name>
        <dbReference type="ChEBI" id="CHEBI:29105"/>
    </ligand>
</feature>
<feature type="binding site" evidence="2">
    <location>
        <position position="37"/>
    </location>
    <ligand>
        <name>Zn(2+)</name>
        <dbReference type="ChEBI" id="CHEBI:29105"/>
    </ligand>
</feature>
<feature type="binding site" evidence="1">
    <location>
        <begin position="117"/>
        <end position="124"/>
    </location>
    <ligand>
        <name>ATP</name>
        <dbReference type="ChEBI" id="CHEBI:30616"/>
    </ligand>
</feature>
<dbReference type="EMBL" id="CP000847">
    <property type="protein sequence ID" value="ABV75326.1"/>
    <property type="molecule type" value="Genomic_DNA"/>
</dbReference>
<dbReference type="RefSeq" id="WP_012149956.1">
    <property type="nucleotide sequence ID" value="NC_009881.1"/>
</dbReference>
<dbReference type="SMR" id="A8GPK1"/>
<dbReference type="STRING" id="293614.A1C_05445"/>
<dbReference type="KEGG" id="rak:A1C_05445"/>
<dbReference type="eggNOG" id="COG1219">
    <property type="taxonomic scope" value="Bacteria"/>
</dbReference>
<dbReference type="HOGENOM" id="CLU_014218_8_2_5"/>
<dbReference type="Proteomes" id="UP000006830">
    <property type="component" value="Chromosome"/>
</dbReference>
<dbReference type="GO" id="GO:0009376">
    <property type="term" value="C:HslUV protease complex"/>
    <property type="evidence" value="ECO:0007669"/>
    <property type="project" value="TreeGrafter"/>
</dbReference>
<dbReference type="GO" id="GO:0005524">
    <property type="term" value="F:ATP binding"/>
    <property type="evidence" value="ECO:0007669"/>
    <property type="project" value="UniProtKB-UniRule"/>
</dbReference>
<dbReference type="GO" id="GO:0016887">
    <property type="term" value="F:ATP hydrolysis activity"/>
    <property type="evidence" value="ECO:0007669"/>
    <property type="project" value="InterPro"/>
</dbReference>
<dbReference type="GO" id="GO:0140662">
    <property type="term" value="F:ATP-dependent protein folding chaperone"/>
    <property type="evidence" value="ECO:0007669"/>
    <property type="project" value="InterPro"/>
</dbReference>
<dbReference type="GO" id="GO:0046983">
    <property type="term" value="F:protein dimerization activity"/>
    <property type="evidence" value="ECO:0007669"/>
    <property type="project" value="InterPro"/>
</dbReference>
<dbReference type="GO" id="GO:0051082">
    <property type="term" value="F:unfolded protein binding"/>
    <property type="evidence" value="ECO:0007669"/>
    <property type="project" value="UniProtKB-UniRule"/>
</dbReference>
<dbReference type="GO" id="GO:0008270">
    <property type="term" value="F:zinc ion binding"/>
    <property type="evidence" value="ECO:0007669"/>
    <property type="project" value="InterPro"/>
</dbReference>
<dbReference type="GO" id="GO:0051301">
    <property type="term" value="P:cell division"/>
    <property type="evidence" value="ECO:0007669"/>
    <property type="project" value="TreeGrafter"/>
</dbReference>
<dbReference type="GO" id="GO:0051603">
    <property type="term" value="P:proteolysis involved in protein catabolic process"/>
    <property type="evidence" value="ECO:0007669"/>
    <property type="project" value="TreeGrafter"/>
</dbReference>
<dbReference type="CDD" id="cd19497">
    <property type="entry name" value="RecA-like_ClpX"/>
    <property type="match status" value="1"/>
</dbReference>
<dbReference type="FunFam" id="1.10.8.60:FF:000002">
    <property type="entry name" value="ATP-dependent Clp protease ATP-binding subunit ClpX"/>
    <property type="match status" value="1"/>
</dbReference>
<dbReference type="FunFam" id="3.40.50.300:FF:000005">
    <property type="entry name" value="ATP-dependent Clp protease ATP-binding subunit ClpX"/>
    <property type="match status" value="1"/>
</dbReference>
<dbReference type="Gene3D" id="1.10.8.60">
    <property type="match status" value="1"/>
</dbReference>
<dbReference type="Gene3D" id="6.20.220.10">
    <property type="entry name" value="ClpX chaperone, C4-type zinc finger domain"/>
    <property type="match status" value="1"/>
</dbReference>
<dbReference type="Gene3D" id="3.40.50.300">
    <property type="entry name" value="P-loop containing nucleotide triphosphate hydrolases"/>
    <property type="match status" value="1"/>
</dbReference>
<dbReference type="HAMAP" id="MF_00175">
    <property type="entry name" value="ClpX"/>
    <property type="match status" value="1"/>
</dbReference>
<dbReference type="InterPro" id="IPR003593">
    <property type="entry name" value="AAA+_ATPase"/>
</dbReference>
<dbReference type="InterPro" id="IPR050052">
    <property type="entry name" value="ATP-dep_Clp_protease_ClpX"/>
</dbReference>
<dbReference type="InterPro" id="IPR003959">
    <property type="entry name" value="ATPase_AAA_core"/>
</dbReference>
<dbReference type="InterPro" id="IPR019489">
    <property type="entry name" value="Clp_ATPase_C"/>
</dbReference>
<dbReference type="InterPro" id="IPR004487">
    <property type="entry name" value="Clp_protease_ATP-bd_su_ClpX"/>
</dbReference>
<dbReference type="InterPro" id="IPR046425">
    <property type="entry name" value="ClpX_bact"/>
</dbReference>
<dbReference type="InterPro" id="IPR027417">
    <property type="entry name" value="P-loop_NTPase"/>
</dbReference>
<dbReference type="InterPro" id="IPR010603">
    <property type="entry name" value="Znf_CppX_C4"/>
</dbReference>
<dbReference type="InterPro" id="IPR038366">
    <property type="entry name" value="Znf_CppX_C4_sf"/>
</dbReference>
<dbReference type="NCBIfam" id="TIGR00382">
    <property type="entry name" value="clpX"/>
    <property type="match status" value="1"/>
</dbReference>
<dbReference type="NCBIfam" id="NF003745">
    <property type="entry name" value="PRK05342.1"/>
    <property type="match status" value="1"/>
</dbReference>
<dbReference type="PANTHER" id="PTHR48102:SF7">
    <property type="entry name" value="ATP-DEPENDENT CLP PROTEASE ATP-BINDING SUBUNIT CLPX-LIKE, MITOCHONDRIAL"/>
    <property type="match status" value="1"/>
</dbReference>
<dbReference type="PANTHER" id="PTHR48102">
    <property type="entry name" value="ATP-DEPENDENT CLP PROTEASE ATP-BINDING SUBUNIT CLPX-LIKE, MITOCHONDRIAL-RELATED"/>
    <property type="match status" value="1"/>
</dbReference>
<dbReference type="Pfam" id="PF07724">
    <property type="entry name" value="AAA_2"/>
    <property type="match status" value="1"/>
</dbReference>
<dbReference type="Pfam" id="PF10431">
    <property type="entry name" value="ClpB_D2-small"/>
    <property type="match status" value="1"/>
</dbReference>
<dbReference type="Pfam" id="PF06689">
    <property type="entry name" value="zf-C4_ClpX"/>
    <property type="match status" value="1"/>
</dbReference>
<dbReference type="SMART" id="SM00382">
    <property type="entry name" value="AAA"/>
    <property type="match status" value="1"/>
</dbReference>
<dbReference type="SMART" id="SM01086">
    <property type="entry name" value="ClpB_D2-small"/>
    <property type="match status" value="1"/>
</dbReference>
<dbReference type="SMART" id="SM00994">
    <property type="entry name" value="zf-C4_ClpX"/>
    <property type="match status" value="1"/>
</dbReference>
<dbReference type="SUPFAM" id="SSF57716">
    <property type="entry name" value="Glucocorticoid receptor-like (DNA-binding domain)"/>
    <property type="match status" value="1"/>
</dbReference>
<dbReference type="SUPFAM" id="SSF52540">
    <property type="entry name" value="P-loop containing nucleoside triphosphate hydrolases"/>
    <property type="match status" value="1"/>
</dbReference>
<dbReference type="PROSITE" id="PS51902">
    <property type="entry name" value="CLPX_ZB"/>
    <property type="match status" value="1"/>
</dbReference>
<name>CLPX_RICAH</name>
<protein>
    <recommendedName>
        <fullName evidence="1">ATP-dependent Clp protease ATP-binding subunit ClpX</fullName>
    </recommendedName>
</protein>
<comment type="function">
    <text evidence="1">ATP-dependent specificity component of the Clp protease. It directs the protease to specific substrates. Can perform chaperone functions in the absence of ClpP.</text>
</comment>
<comment type="subunit">
    <text evidence="1">Component of the ClpX-ClpP complex. Forms a hexameric ring that, in the presence of ATP, binds to fourteen ClpP subunits assembled into a disk-like structure with a central cavity, resembling the structure of eukaryotic proteasomes.</text>
</comment>
<comment type="similarity">
    <text evidence="1">Belongs to the ClpX chaperone family.</text>
</comment>
<keyword id="KW-0067">ATP-binding</keyword>
<keyword id="KW-0143">Chaperone</keyword>
<keyword id="KW-0479">Metal-binding</keyword>
<keyword id="KW-0547">Nucleotide-binding</keyword>
<keyword id="KW-0862">Zinc</keyword>
<organism>
    <name type="scientific">Rickettsia akari (strain Hartford)</name>
    <dbReference type="NCBI Taxonomy" id="293614"/>
    <lineage>
        <taxon>Bacteria</taxon>
        <taxon>Pseudomonadati</taxon>
        <taxon>Pseudomonadota</taxon>
        <taxon>Alphaproteobacteria</taxon>
        <taxon>Rickettsiales</taxon>
        <taxon>Rickettsiaceae</taxon>
        <taxon>Rickettsieae</taxon>
        <taxon>Rickettsia</taxon>
        <taxon>spotted fever group</taxon>
    </lineage>
</organism>
<sequence length="425" mass="46698">MVVEADKKELICSFCSKKQHEVKKLIAGPAVFICDECIDLCTDIMKEESRVALKQITSSIPTPQKICAILNDYVVGQDQAKKILAVAVYNHYKRLEYVQSGNNDVELNKSNILLIGPTGSGKTLLAQTLAKILDVPFTMADATSLTEAGYVGEDVENILLRLLIAAEFNIAKAQKGIIYIDEVDKIARKSENPSITRDVSGEGVQQALLKIMEGTVASVPPQGGRKHPQQDFVQLDTSNILFICGGAFMGVDSIITSRTNHSSIGFAANVNIDKEKNNSEILKSLEIEDLTKFGLIPEFIGRLPIVTTLDELDKEALITILTKPKNAIVKQYKKQFELDDTELVIENSALEAIAEKALAKKTGARGLRSILEHLLLDSMYKVAELKKQRVTITKEVVNGLVEPIMTSLISTKSNKKQSMIEDIPA</sequence>
<accession>A8GPK1</accession>